<proteinExistence type="inferred from homology"/>
<keyword id="KW-0028">Amino-acid biosynthesis</keyword>
<keyword id="KW-0057">Aromatic amino acid biosynthesis</keyword>
<keyword id="KW-0328">Glycosyltransferase</keyword>
<keyword id="KW-0460">Magnesium</keyword>
<keyword id="KW-0479">Metal-binding</keyword>
<keyword id="KW-0808">Transferase</keyword>
<keyword id="KW-0822">Tryptophan biosynthesis</keyword>
<protein>
    <recommendedName>
        <fullName evidence="1">Anthranilate phosphoribosyltransferase</fullName>
        <ecNumber evidence="1">2.4.2.18</ecNumber>
    </recommendedName>
</protein>
<reference key="1">
    <citation type="journal article" date="2008" name="BMC Genomics">
        <title>Genome sequence and rapid evolution of the rice pathogen Xanthomonas oryzae pv. oryzae PXO99A.</title>
        <authorList>
            <person name="Salzberg S.L."/>
            <person name="Sommer D.D."/>
            <person name="Schatz M.C."/>
            <person name="Phillippy A.M."/>
            <person name="Rabinowicz P.D."/>
            <person name="Tsuge S."/>
            <person name="Furutani A."/>
            <person name="Ochiai H."/>
            <person name="Delcher A.L."/>
            <person name="Kelley D."/>
            <person name="Madupu R."/>
            <person name="Puiu D."/>
            <person name="Radune D."/>
            <person name="Shumway M."/>
            <person name="Trapnell C."/>
            <person name="Aparna G."/>
            <person name="Jha G."/>
            <person name="Pandey A."/>
            <person name="Patil P.B."/>
            <person name="Ishihara H."/>
            <person name="Meyer D.F."/>
            <person name="Szurek B."/>
            <person name="Verdier V."/>
            <person name="Koebnik R."/>
            <person name="Dow J.M."/>
            <person name="Ryan R.P."/>
            <person name="Hirata H."/>
            <person name="Tsuyumu S."/>
            <person name="Won Lee S."/>
            <person name="Seo Y.-S."/>
            <person name="Sriariyanum M."/>
            <person name="Ronald P.C."/>
            <person name="Sonti R.V."/>
            <person name="Van Sluys M.-A."/>
            <person name="Leach J.E."/>
            <person name="White F.F."/>
            <person name="Bogdanove A.J."/>
        </authorList>
    </citation>
    <scope>NUCLEOTIDE SEQUENCE [LARGE SCALE GENOMIC DNA]</scope>
    <source>
        <strain>PXO99A</strain>
    </source>
</reference>
<organism>
    <name type="scientific">Xanthomonas oryzae pv. oryzae (strain PXO99A)</name>
    <dbReference type="NCBI Taxonomy" id="360094"/>
    <lineage>
        <taxon>Bacteria</taxon>
        <taxon>Pseudomonadati</taxon>
        <taxon>Pseudomonadota</taxon>
        <taxon>Gammaproteobacteria</taxon>
        <taxon>Lysobacterales</taxon>
        <taxon>Lysobacteraceae</taxon>
        <taxon>Xanthomonas</taxon>
    </lineage>
</organism>
<gene>
    <name evidence="1" type="primary">trpD</name>
    <name type="ordered locus">PXO_04003</name>
</gene>
<accession>B2SL02</accession>
<comment type="function">
    <text evidence="1">Catalyzes the transfer of the phosphoribosyl group of 5-phosphorylribose-1-pyrophosphate (PRPP) to anthranilate to yield N-(5'-phosphoribosyl)-anthranilate (PRA).</text>
</comment>
<comment type="catalytic activity">
    <reaction evidence="1">
        <text>N-(5-phospho-beta-D-ribosyl)anthranilate + diphosphate = 5-phospho-alpha-D-ribose 1-diphosphate + anthranilate</text>
        <dbReference type="Rhea" id="RHEA:11768"/>
        <dbReference type="ChEBI" id="CHEBI:16567"/>
        <dbReference type="ChEBI" id="CHEBI:18277"/>
        <dbReference type="ChEBI" id="CHEBI:33019"/>
        <dbReference type="ChEBI" id="CHEBI:58017"/>
        <dbReference type="EC" id="2.4.2.18"/>
    </reaction>
</comment>
<comment type="cofactor">
    <cofactor evidence="1">
        <name>Mg(2+)</name>
        <dbReference type="ChEBI" id="CHEBI:18420"/>
    </cofactor>
    <text evidence="1">Binds 2 magnesium ions per monomer.</text>
</comment>
<comment type="pathway">
    <text evidence="1">Amino-acid biosynthesis; L-tryptophan biosynthesis; L-tryptophan from chorismate: step 2/5.</text>
</comment>
<comment type="subunit">
    <text evidence="1">Homodimer.</text>
</comment>
<comment type="similarity">
    <text evidence="1">Belongs to the anthranilate phosphoribosyltransferase family.</text>
</comment>
<feature type="chain" id="PRO_1000099857" description="Anthranilate phosphoribosyltransferase">
    <location>
        <begin position="1"/>
        <end position="345"/>
    </location>
</feature>
<feature type="binding site" evidence="1">
    <location>
        <position position="84"/>
    </location>
    <ligand>
        <name>5-phospho-alpha-D-ribose 1-diphosphate</name>
        <dbReference type="ChEBI" id="CHEBI:58017"/>
    </ligand>
</feature>
<feature type="binding site" evidence="1">
    <location>
        <position position="84"/>
    </location>
    <ligand>
        <name>anthranilate</name>
        <dbReference type="ChEBI" id="CHEBI:16567"/>
        <label>1</label>
    </ligand>
</feature>
<feature type="binding site" evidence="1">
    <location>
        <begin position="87"/>
        <end position="88"/>
    </location>
    <ligand>
        <name>5-phospho-alpha-D-ribose 1-diphosphate</name>
        <dbReference type="ChEBI" id="CHEBI:58017"/>
    </ligand>
</feature>
<feature type="binding site" evidence="1">
    <location>
        <position position="92"/>
    </location>
    <ligand>
        <name>5-phospho-alpha-D-ribose 1-diphosphate</name>
        <dbReference type="ChEBI" id="CHEBI:58017"/>
    </ligand>
</feature>
<feature type="binding site" evidence="1">
    <location>
        <begin position="94"/>
        <end position="97"/>
    </location>
    <ligand>
        <name>5-phospho-alpha-D-ribose 1-diphosphate</name>
        <dbReference type="ChEBI" id="CHEBI:58017"/>
    </ligand>
</feature>
<feature type="binding site" evidence="1">
    <location>
        <position position="96"/>
    </location>
    <ligand>
        <name>Mg(2+)</name>
        <dbReference type="ChEBI" id="CHEBI:18420"/>
        <label>1</label>
    </ligand>
</feature>
<feature type="binding site" evidence="1">
    <location>
        <begin position="112"/>
        <end position="120"/>
    </location>
    <ligand>
        <name>5-phospho-alpha-D-ribose 1-diphosphate</name>
        <dbReference type="ChEBI" id="CHEBI:58017"/>
    </ligand>
</feature>
<feature type="binding site" evidence="1">
    <location>
        <position position="115"/>
    </location>
    <ligand>
        <name>anthranilate</name>
        <dbReference type="ChEBI" id="CHEBI:16567"/>
        <label>1</label>
    </ligand>
</feature>
<feature type="binding site" evidence="1">
    <location>
        <position position="124"/>
    </location>
    <ligand>
        <name>5-phospho-alpha-D-ribose 1-diphosphate</name>
        <dbReference type="ChEBI" id="CHEBI:58017"/>
    </ligand>
</feature>
<feature type="binding site" evidence="1">
    <location>
        <position position="170"/>
    </location>
    <ligand>
        <name>anthranilate</name>
        <dbReference type="ChEBI" id="CHEBI:16567"/>
        <label>2</label>
    </ligand>
</feature>
<feature type="binding site" evidence="1">
    <location>
        <position position="229"/>
    </location>
    <ligand>
        <name>Mg(2+)</name>
        <dbReference type="ChEBI" id="CHEBI:18420"/>
        <label>2</label>
    </ligand>
</feature>
<feature type="binding site" evidence="1">
    <location>
        <position position="230"/>
    </location>
    <ligand>
        <name>Mg(2+)</name>
        <dbReference type="ChEBI" id="CHEBI:18420"/>
        <label>1</label>
    </ligand>
</feature>
<feature type="binding site" evidence="1">
    <location>
        <position position="230"/>
    </location>
    <ligand>
        <name>Mg(2+)</name>
        <dbReference type="ChEBI" id="CHEBI:18420"/>
        <label>2</label>
    </ligand>
</feature>
<sequence>MPITPQEALQRTIEHREIFHDEMVGLMRQIMRGEVSDMMVAAILTGLRVKKETIGEIAGAATVMREFSRRVDVSDHQHMVDIVGTGGDGSHTFNISTCAMFVAAAGGAKVAKHGNRSVSSKSGSADALEALGAVIELQPEQVADALAQTGIGFMYAPLHHPSMKVVAPVRREMGVRTIFNILGPLTNPAGSPNILMGVFHPDLVGIQARVLQELGAERALVVWGRDGMDELSLGAGTLVGELRDGQVREYEVHPEDFGIAMSASRNLKVADAAQSRAMLLRVLDNVPGPALDIVALNAGAALYVAGLAGSIADGVLRARAVLADGSARARLDAYVAYTHQLAGQP</sequence>
<name>TRPD_XANOP</name>
<evidence type="ECO:0000255" key="1">
    <source>
        <dbReference type="HAMAP-Rule" id="MF_00211"/>
    </source>
</evidence>
<dbReference type="EC" id="2.4.2.18" evidence="1"/>
<dbReference type="EMBL" id="CP000967">
    <property type="protein sequence ID" value="ACD57279.1"/>
    <property type="molecule type" value="Genomic_DNA"/>
</dbReference>
<dbReference type="RefSeq" id="WP_011409580.1">
    <property type="nucleotide sequence ID" value="NC_010717.2"/>
</dbReference>
<dbReference type="SMR" id="B2SL02"/>
<dbReference type="KEGG" id="xop:PXO_04003"/>
<dbReference type="eggNOG" id="COG0547">
    <property type="taxonomic scope" value="Bacteria"/>
</dbReference>
<dbReference type="HOGENOM" id="CLU_034315_2_1_6"/>
<dbReference type="UniPathway" id="UPA00035">
    <property type="reaction ID" value="UER00041"/>
</dbReference>
<dbReference type="Proteomes" id="UP000001740">
    <property type="component" value="Chromosome"/>
</dbReference>
<dbReference type="GO" id="GO:0005829">
    <property type="term" value="C:cytosol"/>
    <property type="evidence" value="ECO:0007669"/>
    <property type="project" value="TreeGrafter"/>
</dbReference>
<dbReference type="GO" id="GO:0004048">
    <property type="term" value="F:anthranilate phosphoribosyltransferase activity"/>
    <property type="evidence" value="ECO:0007669"/>
    <property type="project" value="UniProtKB-UniRule"/>
</dbReference>
<dbReference type="GO" id="GO:0000287">
    <property type="term" value="F:magnesium ion binding"/>
    <property type="evidence" value="ECO:0007669"/>
    <property type="project" value="UniProtKB-UniRule"/>
</dbReference>
<dbReference type="GO" id="GO:0000162">
    <property type="term" value="P:L-tryptophan biosynthetic process"/>
    <property type="evidence" value="ECO:0007669"/>
    <property type="project" value="UniProtKB-UniRule"/>
</dbReference>
<dbReference type="FunFam" id="1.20.970.10:FF:000006">
    <property type="entry name" value="Anthranilate phosphoribosyltransferase"/>
    <property type="match status" value="1"/>
</dbReference>
<dbReference type="FunFam" id="3.40.1030.10:FF:000002">
    <property type="entry name" value="Anthranilate phosphoribosyltransferase"/>
    <property type="match status" value="1"/>
</dbReference>
<dbReference type="Gene3D" id="3.40.1030.10">
    <property type="entry name" value="Nucleoside phosphorylase/phosphoribosyltransferase catalytic domain"/>
    <property type="match status" value="1"/>
</dbReference>
<dbReference type="Gene3D" id="1.20.970.10">
    <property type="entry name" value="Transferase, Pyrimidine Nucleoside Phosphorylase, Chain C"/>
    <property type="match status" value="1"/>
</dbReference>
<dbReference type="HAMAP" id="MF_00211">
    <property type="entry name" value="TrpD"/>
    <property type="match status" value="1"/>
</dbReference>
<dbReference type="InterPro" id="IPR005940">
    <property type="entry name" value="Anthranilate_Pribosyl_Tfrase"/>
</dbReference>
<dbReference type="InterPro" id="IPR000312">
    <property type="entry name" value="Glycosyl_Trfase_fam3"/>
</dbReference>
<dbReference type="InterPro" id="IPR017459">
    <property type="entry name" value="Glycosyl_Trfase_fam3_N_dom"/>
</dbReference>
<dbReference type="InterPro" id="IPR036320">
    <property type="entry name" value="Glycosyl_Trfase_fam3_N_dom_sf"/>
</dbReference>
<dbReference type="InterPro" id="IPR035902">
    <property type="entry name" value="Nuc_phospho_transferase"/>
</dbReference>
<dbReference type="NCBIfam" id="TIGR01245">
    <property type="entry name" value="trpD"/>
    <property type="match status" value="1"/>
</dbReference>
<dbReference type="PANTHER" id="PTHR43285">
    <property type="entry name" value="ANTHRANILATE PHOSPHORIBOSYLTRANSFERASE"/>
    <property type="match status" value="1"/>
</dbReference>
<dbReference type="PANTHER" id="PTHR43285:SF2">
    <property type="entry name" value="ANTHRANILATE PHOSPHORIBOSYLTRANSFERASE"/>
    <property type="match status" value="1"/>
</dbReference>
<dbReference type="Pfam" id="PF02885">
    <property type="entry name" value="Glycos_trans_3N"/>
    <property type="match status" value="1"/>
</dbReference>
<dbReference type="Pfam" id="PF00591">
    <property type="entry name" value="Glycos_transf_3"/>
    <property type="match status" value="1"/>
</dbReference>
<dbReference type="SUPFAM" id="SSF52418">
    <property type="entry name" value="Nucleoside phosphorylase/phosphoribosyltransferase catalytic domain"/>
    <property type="match status" value="1"/>
</dbReference>
<dbReference type="SUPFAM" id="SSF47648">
    <property type="entry name" value="Nucleoside phosphorylase/phosphoribosyltransferase N-terminal domain"/>
    <property type="match status" value="1"/>
</dbReference>